<organism>
    <name type="scientific">Acinetobacter baumannii (strain AYE)</name>
    <dbReference type="NCBI Taxonomy" id="509173"/>
    <lineage>
        <taxon>Bacteria</taxon>
        <taxon>Pseudomonadati</taxon>
        <taxon>Pseudomonadota</taxon>
        <taxon>Gammaproteobacteria</taxon>
        <taxon>Moraxellales</taxon>
        <taxon>Moraxellaceae</taxon>
        <taxon>Acinetobacter</taxon>
        <taxon>Acinetobacter calcoaceticus/baumannii complex</taxon>
    </lineage>
</organism>
<proteinExistence type="inferred from homology"/>
<keyword id="KW-0378">Hydrolase</keyword>
<keyword id="KW-0441">Lipid A biosynthesis</keyword>
<keyword id="KW-0444">Lipid biosynthesis</keyword>
<keyword id="KW-0443">Lipid metabolism</keyword>
<keyword id="KW-0479">Metal-binding</keyword>
<keyword id="KW-0862">Zinc</keyword>
<accession>B0V9D9</accession>
<dbReference type="EC" id="3.5.1.108" evidence="1"/>
<dbReference type="EMBL" id="CU459141">
    <property type="protein sequence ID" value="CAM85140.1"/>
    <property type="molecule type" value="Genomic_DNA"/>
</dbReference>
<dbReference type="RefSeq" id="WP_000240700.1">
    <property type="nucleotide sequence ID" value="NZ_JBDGFB010000004.1"/>
</dbReference>
<dbReference type="SMR" id="B0V9D9"/>
<dbReference type="EnsemblBacteria" id="CAM85140">
    <property type="protein sequence ID" value="CAM85140"/>
    <property type="gene ID" value="ABAYE0154"/>
</dbReference>
<dbReference type="KEGG" id="aby:ABAYE0154"/>
<dbReference type="HOGENOM" id="CLU_046528_1_0_6"/>
<dbReference type="UniPathway" id="UPA00359">
    <property type="reaction ID" value="UER00478"/>
</dbReference>
<dbReference type="GO" id="GO:0016020">
    <property type="term" value="C:membrane"/>
    <property type="evidence" value="ECO:0007669"/>
    <property type="project" value="GOC"/>
</dbReference>
<dbReference type="GO" id="GO:0046872">
    <property type="term" value="F:metal ion binding"/>
    <property type="evidence" value="ECO:0007669"/>
    <property type="project" value="UniProtKB-KW"/>
</dbReference>
<dbReference type="GO" id="GO:0103117">
    <property type="term" value="F:UDP-3-O-acyl-N-acetylglucosamine deacetylase activity"/>
    <property type="evidence" value="ECO:0007669"/>
    <property type="project" value="UniProtKB-UniRule"/>
</dbReference>
<dbReference type="GO" id="GO:0009245">
    <property type="term" value="P:lipid A biosynthetic process"/>
    <property type="evidence" value="ECO:0007669"/>
    <property type="project" value="UniProtKB-UniRule"/>
</dbReference>
<dbReference type="Gene3D" id="3.30.230.20">
    <property type="entry name" value="lpxc deacetylase, domain 1"/>
    <property type="match status" value="1"/>
</dbReference>
<dbReference type="Gene3D" id="3.30.1700.10">
    <property type="entry name" value="lpxc deacetylase, domain 2"/>
    <property type="match status" value="1"/>
</dbReference>
<dbReference type="HAMAP" id="MF_00388">
    <property type="entry name" value="LpxC"/>
    <property type="match status" value="1"/>
</dbReference>
<dbReference type="InterPro" id="IPR020568">
    <property type="entry name" value="Ribosomal_Su5_D2-typ_SF"/>
</dbReference>
<dbReference type="InterPro" id="IPR004463">
    <property type="entry name" value="UDP-acyl_GlcNac_deAcase"/>
</dbReference>
<dbReference type="InterPro" id="IPR011334">
    <property type="entry name" value="UDP-acyl_GlcNac_deAcase_C"/>
</dbReference>
<dbReference type="InterPro" id="IPR015870">
    <property type="entry name" value="UDP-acyl_N-AcGlcN_deAcase_N"/>
</dbReference>
<dbReference type="NCBIfam" id="TIGR00325">
    <property type="entry name" value="lpxC"/>
    <property type="match status" value="1"/>
</dbReference>
<dbReference type="PANTHER" id="PTHR33694">
    <property type="entry name" value="UDP-3-O-ACYL-N-ACETYLGLUCOSAMINE DEACETYLASE 1, MITOCHONDRIAL-RELATED"/>
    <property type="match status" value="1"/>
</dbReference>
<dbReference type="PANTHER" id="PTHR33694:SF1">
    <property type="entry name" value="UDP-3-O-ACYL-N-ACETYLGLUCOSAMINE DEACETYLASE 1, MITOCHONDRIAL-RELATED"/>
    <property type="match status" value="1"/>
</dbReference>
<dbReference type="Pfam" id="PF03331">
    <property type="entry name" value="LpxC"/>
    <property type="match status" value="1"/>
</dbReference>
<dbReference type="SUPFAM" id="SSF54211">
    <property type="entry name" value="Ribosomal protein S5 domain 2-like"/>
    <property type="match status" value="2"/>
</dbReference>
<gene>
    <name evidence="1" type="primary">lpxC</name>
    <name type="ordered locus">ABAYE0154</name>
</gene>
<evidence type="ECO:0000255" key="1">
    <source>
        <dbReference type="HAMAP-Rule" id="MF_00388"/>
    </source>
</evidence>
<comment type="function">
    <text evidence="1">Catalyzes the hydrolysis of UDP-3-O-myristoyl-N-acetylglucosamine to form UDP-3-O-myristoylglucosamine and acetate, the committed step in lipid A biosynthesis.</text>
</comment>
<comment type="catalytic activity">
    <reaction evidence="1">
        <text>a UDP-3-O-[(3R)-3-hydroxyacyl]-N-acetyl-alpha-D-glucosamine + H2O = a UDP-3-O-[(3R)-3-hydroxyacyl]-alpha-D-glucosamine + acetate</text>
        <dbReference type="Rhea" id="RHEA:67816"/>
        <dbReference type="ChEBI" id="CHEBI:15377"/>
        <dbReference type="ChEBI" id="CHEBI:30089"/>
        <dbReference type="ChEBI" id="CHEBI:137740"/>
        <dbReference type="ChEBI" id="CHEBI:173225"/>
        <dbReference type="EC" id="3.5.1.108"/>
    </reaction>
</comment>
<comment type="cofactor">
    <cofactor evidence="1">
        <name>Zn(2+)</name>
        <dbReference type="ChEBI" id="CHEBI:29105"/>
    </cofactor>
</comment>
<comment type="pathway">
    <text evidence="1">Glycolipid biosynthesis; lipid IV(A) biosynthesis; lipid IV(A) from (3R)-3-hydroxytetradecanoyl-[acyl-carrier-protein] and UDP-N-acetyl-alpha-D-glucosamine: step 2/6.</text>
</comment>
<comment type="similarity">
    <text evidence="1">Belongs to the LpxC family.</text>
</comment>
<protein>
    <recommendedName>
        <fullName evidence="1">UDP-3-O-acyl-N-acetylglucosamine deacetylase</fullName>
        <shortName evidence="1">UDP-3-O-acyl-GlcNAc deacetylase</shortName>
        <ecNumber evidence="1">3.5.1.108</ecNumber>
    </recommendedName>
    <alternativeName>
        <fullName evidence="1">UDP-3-O-[R-3-hydroxymyristoyl]-N-acetylglucosamine deacetylase</fullName>
    </alternativeName>
</protein>
<feature type="chain" id="PRO_1000190879" description="UDP-3-O-acyl-N-acetylglucosamine deacetylase">
    <location>
        <begin position="1"/>
        <end position="300"/>
    </location>
</feature>
<feature type="active site" description="Proton donor" evidence="1">
    <location>
        <position position="264"/>
    </location>
</feature>
<feature type="binding site" evidence="1">
    <location>
        <position position="78"/>
    </location>
    <ligand>
        <name>Zn(2+)</name>
        <dbReference type="ChEBI" id="CHEBI:29105"/>
    </ligand>
</feature>
<feature type="binding site" evidence="1">
    <location>
        <position position="237"/>
    </location>
    <ligand>
        <name>Zn(2+)</name>
        <dbReference type="ChEBI" id="CHEBI:29105"/>
    </ligand>
</feature>
<feature type="binding site" evidence="1">
    <location>
        <position position="241"/>
    </location>
    <ligand>
        <name>Zn(2+)</name>
        <dbReference type="ChEBI" id="CHEBI:29105"/>
    </ligand>
</feature>
<reference key="1">
    <citation type="journal article" date="2008" name="PLoS ONE">
        <title>Comparative analysis of Acinetobacters: three genomes for three lifestyles.</title>
        <authorList>
            <person name="Vallenet D."/>
            <person name="Nordmann P."/>
            <person name="Barbe V."/>
            <person name="Poirel L."/>
            <person name="Mangenot S."/>
            <person name="Bataille E."/>
            <person name="Dossat C."/>
            <person name="Gas S."/>
            <person name="Kreimeyer A."/>
            <person name="Lenoble P."/>
            <person name="Oztas S."/>
            <person name="Poulain J."/>
            <person name="Segurens B."/>
            <person name="Robert C."/>
            <person name="Abergel C."/>
            <person name="Claverie J.-M."/>
            <person name="Raoult D."/>
            <person name="Medigue C."/>
            <person name="Weissenbach J."/>
            <person name="Cruveiller S."/>
        </authorList>
    </citation>
    <scope>NUCLEOTIDE SEQUENCE [LARGE SCALE GENOMIC DNA]</scope>
    <source>
        <strain>AYE</strain>
    </source>
</reference>
<sequence>MVKQRTLNRVVKASGIGLHSGQKVMINFIPHTVDGGIVFRRIDLDPPVDIPANALLIQEAFMCSNLVTGDIKVGTIEHVMSAIAGLGIDNLIVEVSASEVPIMDGSAGPFIYLLMQGGLREQDAPKKFIKILKPVEALIDDKKAIFSPHNGFQLNFTIDFDHPAFAKEYQSATIDFSTETFVYEVSEARTFGFMKDLDYLKANNLALGASLDNAIGVDDTGVVNEEGLRFADEFVRHKILDAVGDLYLLGHQIIAKFDGYKSGHALNNQLLRNVQSDPSNYEIVTFDDEKDCPIPYVSVT</sequence>
<name>LPXC_ACIBY</name>